<feature type="chain" id="PRO_1000143184" description="Small ribosomal subunit protein uS15">
    <location>
        <begin position="1"/>
        <end position="88"/>
    </location>
</feature>
<keyword id="KW-0687">Ribonucleoprotein</keyword>
<keyword id="KW-0689">Ribosomal protein</keyword>
<keyword id="KW-0694">RNA-binding</keyword>
<keyword id="KW-0699">rRNA-binding</keyword>
<accession>B0K1D1</accession>
<name>RS15_THEPX</name>
<dbReference type="EMBL" id="CP000923">
    <property type="protein sequence ID" value="ABY92926.1"/>
    <property type="molecule type" value="Genomic_DNA"/>
</dbReference>
<dbReference type="SMR" id="B0K1D1"/>
<dbReference type="KEGG" id="tex:Teth514_1640"/>
<dbReference type="HOGENOM" id="CLU_148518_0_0_9"/>
<dbReference type="Proteomes" id="UP000002155">
    <property type="component" value="Chromosome"/>
</dbReference>
<dbReference type="GO" id="GO:0022627">
    <property type="term" value="C:cytosolic small ribosomal subunit"/>
    <property type="evidence" value="ECO:0007669"/>
    <property type="project" value="TreeGrafter"/>
</dbReference>
<dbReference type="GO" id="GO:0019843">
    <property type="term" value="F:rRNA binding"/>
    <property type="evidence" value="ECO:0007669"/>
    <property type="project" value="UniProtKB-UniRule"/>
</dbReference>
<dbReference type="GO" id="GO:0003735">
    <property type="term" value="F:structural constituent of ribosome"/>
    <property type="evidence" value="ECO:0007669"/>
    <property type="project" value="InterPro"/>
</dbReference>
<dbReference type="GO" id="GO:0006412">
    <property type="term" value="P:translation"/>
    <property type="evidence" value="ECO:0007669"/>
    <property type="project" value="UniProtKB-UniRule"/>
</dbReference>
<dbReference type="CDD" id="cd00353">
    <property type="entry name" value="Ribosomal_S15p_S13e"/>
    <property type="match status" value="1"/>
</dbReference>
<dbReference type="FunFam" id="1.10.287.10:FF:000002">
    <property type="entry name" value="30S ribosomal protein S15"/>
    <property type="match status" value="1"/>
</dbReference>
<dbReference type="Gene3D" id="6.10.250.3130">
    <property type="match status" value="1"/>
</dbReference>
<dbReference type="Gene3D" id="1.10.287.10">
    <property type="entry name" value="S15/NS1, RNA-binding"/>
    <property type="match status" value="1"/>
</dbReference>
<dbReference type="HAMAP" id="MF_01343_B">
    <property type="entry name" value="Ribosomal_uS15_B"/>
    <property type="match status" value="1"/>
</dbReference>
<dbReference type="InterPro" id="IPR000589">
    <property type="entry name" value="Ribosomal_uS15"/>
</dbReference>
<dbReference type="InterPro" id="IPR005290">
    <property type="entry name" value="Ribosomal_uS15_bac-type"/>
</dbReference>
<dbReference type="InterPro" id="IPR009068">
    <property type="entry name" value="uS15_NS1_RNA-bd_sf"/>
</dbReference>
<dbReference type="NCBIfam" id="TIGR00952">
    <property type="entry name" value="S15_bact"/>
    <property type="match status" value="1"/>
</dbReference>
<dbReference type="PANTHER" id="PTHR23321">
    <property type="entry name" value="RIBOSOMAL PROTEIN S15, BACTERIAL AND ORGANELLAR"/>
    <property type="match status" value="1"/>
</dbReference>
<dbReference type="PANTHER" id="PTHR23321:SF26">
    <property type="entry name" value="SMALL RIBOSOMAL SUBUNIT PROTEIN US15M"/>
    <property type="match status" value="1"/>
</dbReference>
<dbReference type="Pfam" id="PF00312">
    <property type="entry name" value="Ribosomal_S15"/>
    <property type="match status" value="1"/>
</dbReference>
<dbReference type="SMART" id="SM01387">
    <property type="entry name" value="Ribosomal_S15"/>
    <property type="match status" value="1"/>
</dbReference>
<dbReference type="SUPFAM" id="SSF47060">
    <property type="entry name" value="S15/NS1 RNA-binding domain"/>
    <property type="match status" value="1"/>
</dbReference>
<dbReference type="PROSITE" id="PS00362">
    <property type="entry name" value="RIBOSOMAL_S15"/>
    <property type="match status" value="1"/>
</dbReference>
<protein>
    <recommendedName>
        <fullName evidence="1">Small ribosomal subunit protein uS15</fullName>
    </recommendedName>
    <alternativeName>
        <fullName evidence="2">30S ribosomal protein S15</fullName>
    </alternativeName>
</protein>
<reference key="1">
    <citation type="submission" date="2008-01" db="EMBL/GenBank/DDBJ databases">
        <title>Complete sequence of Thermoanaerobacter sp. X514.</title>
        <authorList>
            <consortium name="US DOE Joint Genome Institute"/>
            <person name="Copeland A."/>
            <person name="Lucas S."/>
            <person name="Lapidus A."/>
            <person name="Barry K."/>
            <person name="Glavina del Rio T."/>
            <person name="Dalin E."/>
            <person name="Tice H."/>
            <person name="Pitluck S."/>
            <person name="Bruce D."/>
            <person name="Goodwin L."/>
            <person name="Saunders E."/>
            <person name="Brettin T."/>
            <person name="Detter J.C."/>
            <person name="Han C."/>
            <person name="Schmutz J."/>
            <person name="Larimer F."/>
            <person name="Land M."/>
            <person name="Hauser L."/>
            <person name="Kyrpides N."/>
            <person name="Kim E."/>
            <person name="Hemme C."/>
            <person name="Fields M.W."/>
            <person name="He Z."/>
            <person name="Zhou J."/>
            <person name="Richardson P."/>
        </authorList>
    </citation>
    <scope>NUCLEOTIDE SEQUENCE [LARGE SCALE GENOMIC DNA]</scope>
    <source>
        <strain>X514</strain>
    </source>
</reference>
<comment type="function">
    <text evidence="1">One of the primary rRNA binding proteins, it binds directly to 16S rRNA where it helps nucleate assembly of the platform of the 30S subunit by binding and bridging several RNA helices of the 16S rRNA.</text>
</comment>
<comment type="function">
    <text evidence="1">Forms an intersubunit bridge (bridge B4) with the 23S rRNA of the 50S subunit in the ribosome.</text>
</comment>
<comment type="subunit">
    <text evidence="1">Part of the 30S ribosomal subunit. Forms a bridge to the 50S subunit in the 70S ribosome, contacting the 23S rRNA.</text>
</comment>
<comment type="similarity">
    <text evidence="1">Belongs to the universal ribosomal protein uS15 family.</text>
</comment>
<evidence type="ECO:0000255" key="1">
    <source>
        <dbReference type="HAMAP-Rule" id="MF_01343"/>
    </source>
</evidence>
<evidence type="ECO:0000305" key="2"/>
<gene>
    <name evidence="1" type="primary">rpsO</name>
    <name type="ordered locus">Teth514_1640</name>
</gene>
<organism>
    <name type="scientific">Thermoanaerobacter sp. (strain X514)</name>
    <dbReference type="NCBI Taxonomy" id="399726"/>
    <lineage>
        <taxon>Bacteria</taxon>
        <taxon>Bacillati</taxon>
        <taxon>Bacillota</taxon>
        <taxon>Clostridia</taxon>
        <taxon>Thermoanaerobacterales</taxon>
        <taxon>Thermoanaerobacteraceae</taxon>
        <taxon>Thermoanaerobacter</taxon>
    </lineage>
</organism>
<sequence length="88" mass="10431">MLDKEKKAEIINKFKLHDTDTGSPEVQIALLTERINNLNAHLQVHKKDHHSRRGLLKMVGQRRALLNYLMKTDMERYRAIIEKLDLRK</sequence>
<proteinExistence type="inferred from homology"/>